<protein>
    <recommendedName>
        <fullName evidence="1">UPF0335 protein bsl7135</fullName>
    </recommendedName>
</protein>
<keyword id="KW-1185">Reference proteome</keyword>
<proteinExistence type="inferred from homology"/>
<sequence length="90" mass="10277">MATSAAVRDDEPATKFAKDQLKSIIERIERLEEEKKAISDDIRDVYAESKGNGYDVKALRTIVRMRKQDPNERAEAETILETYMQALGMI</sequence>
<feature type="chain" id="PRO_0000219923" description="UPF0335 protein bsl7135">
    <location>
        <begin position="1"/>
        <end position="90"/>
    </location>
</feature>
<organism>
    <name type="scientific">Bradyrhizobium diazoefficiens (strain JCM 10833 / BCRC 13528 / IAM 13628 / NBRC 14792 / USDA 110)</name>
    <dbReference type="NCBI Taxonomy" id="224911"/>
    <lineage>
        <taxon>Bacteria</taxon>
        <taxon>Pseudomonadati</taxon>
        <taxon>Pseudomonadota</taxon>
        <taxon>Alphaproteobacteria</taxon>
        <taxon>Hyphomicrobiales</taxon>
        <taxon>Nitrobacteraceae</taxon>
        <taxon>Bradyrhizobium</taxon>
    </lineage>
</organism>
<accession>Q89EF0</accession>
<name>Y7135_BRADU</name>
<evidence type="ECO:0000255" key="1">
    <source>
        <dbReference type="HAMAP-Rule" id="MF_00797"/>
    </source>
</evidence>
<gene>
    <name type="ordered locus">bsl7135</name>
</gene>
<comment type="similarity">
    <text evidence="1">Belongs to the UPF0335 family.</text>
</comment>
<dbReference type="EMBL" id="BA000040">
    <property type="protein sequence ID" value="BAC52400.1"/>
    <property type="molecule type" value="Genomic_DNA"/>
</dbReference>
<dbReference type="RefSeq" id="NP_773775.1">
    <property type="nucleotide sequence ID" value="NC_004463.1"/>
</dbReference>
<dbReference type="RefSeq" id="WP_008136868.1">
    <property type="nucleotide sequence ID" value="NZ_CP011360.1"/>
</dbReference>
<dbReference type="SMR" id="Q89EF0"/>
<dbReference type="STRING" id="224911.AAV28_33310"/>
<dbReference type="EnsemblBacteria" id="BAC52400">
    <property type="protein sequence ID" value="BAC52400"/>
    <property type="gene ID" value="BAC52400"/>
</dbReference>
<dbReference type="KEGG" id="bja:bsl7135"/>
<dbReference type="PATRIC" id="fig|224911.44.peg.7195"/>
<dbReference type="eggNOG" id="COG3750">
    <property type="taxonomic scope" value="Bacteria"/>
</dbReference>
<dbReference type="HOGENOM" id="CLU_158651_2_0_5"/>
<dbReference type="InParanoid" id="Q89EF0"/>
<dbReference type="OrthoDB" id="9813793at2"/>
<dbReference type="PhylomeDB" id="Q89EF0"/>
<dbReference type="Proteomes" id="UP000002526">
    <property type="component" value="Chromosome"/>
</dbReference>
<dbReference type="GO" id="GO:0003677">
    <property type="term" value="F:DNA binding"/>
    <property type="evidence" value="ECO:0007669"/>
    <property type="project" value="InterPro"/>
</dbReference>
<dbReference type="HAMAP" id="MF_00797">
    <property type="entry name" value="UPF0335"/>
    <property type="match status" value="1"/>
</dbReference>
<dbReference type="InterPro" id="IPR018753">
    <property type="entry name" value="GapR-like"/>
</dbReference>
<dbReference type="InterPro" id="IPR046367">
    <property type="entry name" value="GapR-like_DNA-bd"/>
</dbReference>
<dbReference type="NCBIfam" id="NF010247">
    <property type="entry name" value="PRK13694.1"/>
    <property type="match status" value="1"/>
</dbReference>
<dbReference type="Pfam" id="PF10073">
    <property type="entry name" value="GapR_DNA-bd"/>
    <property type="match status" value="1"/>
</dbReference>
<reference key="1">
    <citation type="journal article" date="2002" name="DNA Res.">
        <title>Complete genomic sequence of nitrogen-fixing symbiotic bacterium Bradyrhizobium japonicum USDA110.</title>
        <authorList>
            <person name="Kaneko T."/>
            <person name="Nakamura Y."/>
            <person name="Sato S."/>
            <person name="Minamisawa K."/>
            <person name="Uchiumi T."/>
            <person name="Sasamoto S."/>
            <person name="Watanabe A."/>
            <person name="Idesawa K."/>
            <person name="Iriguchi M."/>
            <person name="Kawashima K."/>
            <person name="Kohara M."/>
            <person name="Matsumoto M."/>
            <person name="Shimpo S."/>
            <person name="Tsuruoka H."/>
            <person name="Wada T."/>
            <person name="Yamada M."/>
            <person name="Tabata S."/>
        </authorList>
    </citation>
    <scope>NUCLEOTIDE SEQUENCE [LARGE SCALE GENOMIC DNA]</scope>
    <source>
        <strain>JCM 10833 / BCRC 13528 / IAM 13628 / NBRC 14792 / USDA 110</strain>
    </source>
</reference>